<gene>
    <name type="primary">F3</name>
</gene>
<reference key="1">
    <citation type="journal article" date="1991" name="Biochem. Biophys. Res. Commun.">
        <title>cDNA and amino acid sequences of bovine tissue factor.</title>
        <authorList>
            <person name="Takayenoki Y."/>
            <person name="Muta T."/>
            <person name="Miyata T."/>
            <person name="Iwanaga S."/>
        </authorList>
    </citation>
    <scope>NUCLEOTIDE SEQUENCE [MRNA]</scope>
    <scope>PARTIAL PROTEIN SEQUENCE</scope>
    <source>
        <tissue>Adrenal gland</tissue>
    </source>
</reference>
<reference key="2">
    <citation type="submission" date="2006-09" db="EMBL/GenBank/DDBJ databases">
        <authorList>
            <consortium name="NIH - Mammalian Gene Collection (MGC) project"/>
        </authorList>
    </citation>
    <scope>NUCLEOTIDE SEQUENCE [LARGE SCALE MRNA]</scope>
    <source>
        <strain>Hereford</strain>
        <tissue>Fetal skin</tissue>
    </source>
</reference>
<evidence type="ECO:0000250" key="1"/>
<evidence type="ECO:0000250" key="2">
    <source>
        <dbReference type="UniProtKB" id="P13726"/>
    </source>
</evidence>
<evidence type="ECO:0000255" key="3"/>
<evidence type="ECO:0000305" key="4"/>
<feature type="signal peptide">
    <location>
        <begin position="1"/>
        <end position="35"/>
    </location>
</feature>
<feature type="chain" id="PRO_0000033636" description="Tissue factor">
    <location>
        <begin position="36"/>
        <end position="292"/>
    </location>
</feature>
<feature type="topological domain" description="Extracellular" evidence="3">
    <location>
        <begin position="36"/>
        <end position="248"/>
    </location>
</feature>
<feature type="transmembrane region" description="Helical" evidence="3">
    <location>
        <begin position="249"/>
        <end position="271"/>
    </location>
</feature>
<feature type="topological domain" description="Cytoplasmic" evidence="3">
    <location>
        <begin position="272"/>
        <end position="292"/>
    </location>
</feature>
<feature type="short sequence motif" description="WKS motif">
    <location>
        <begin position="46"/>
        <end position="48"/>
    </location>
</feature>
<feature type="lipid moiety-binding region" description="S-palmitoyl cysteine" evidence="1">
    <location>
        <position position="274"/>
    </location>
</feature>
<feature type="glycosylation site" description="N-linked (GlcNAc...) asparagine" evidence="3">
    <location>
        <position position="43"/>
    </location>
</feature>
<feature type="glycosylation site" description="N-linked (GlcNAc...) asparagine" evidence="3">
    <location>
        <position position="153"/>
    </location>
</feature>
<feature type="glycosylation site" description="N-linked (GlcNAc...) asparagine" evidence="3">
    <location>
        <position position="181"/>
    </location>
</feature>
<feature type="disulfide bond" evidence="1">
    <location>
        <begin position="81"/>
        <end position="89"/>
    </location>
</feature>
<feature type="disulfide bond" evidence="1">
    <location>
        <begin position="215"/>
        <end position="238"/>
    </location>
</feature>
<name>TF_BOVIN</name>
<sequence>MATPNGPRVPCPQAAVARALLFGLVLIQGAGVAGTTDVVVAYNITWKSTNFKTILEWEPKPINHVYTVQISPRLGNWKNKCFYTTNTECDVTDEIVKNVRETYLARVLSYPADTSSSTVEPPFTNSPEFTPYLETNLGQPTIQSFEQVGTKLNVTVQDARTLVRANSAFLSLRDVFGKDLNYTLYYWKASSTGKKKATTNTNGFLIDVDKGENYCFHVQAVILSRRVNQKSPESPIKCTSHEKVLSTELFFIIGTVMLVIIIFIVVLSVSLHKCRKVRAERSGKENTPLNAA</sequence>
<organism>
    <name type="scientific">Bos taurus</name>
    <name type="common">Bovine</name>
    <dbReference type="NCBI Taxonomy" id="9913"/>
    <lineage>
        <taxon>Eukaryota</taxon>
        <taxon>Metazoa</taxon>
        <taxon>Chordata</taxon>
        <taxon>Craniata</taxon>
        <taxon>Vertebrata</taxon>
        <taxon>Euteleostomi</taxon>
        <taxon>Mammalia</taxon>
        <taxon>Eutheria</taxon>
        <taxon>Laurasiatheria</taxon>
        <taxon>Artiodactyla</taxon>
        <taxon>Ruminantia</taxon>
        <taxon>Pecora</taxon>
        <taxon>Bovidae</taxon>
        <taxon>Bovinae</taxon>
        <taxon>Bos</taxon>
    </lineage>
</organism>
<accession>P30931</accession>
<accession>Q08DD5</accession>
<comment type="function">
    <text>Initiates blood coagulation by forming a complex with circulating factor VII or VIIa. The [TF:VIIa] complex activates factors IX or X by specific limited proteolysis. TF plays a role in normal hemostasis by initiating the cell-surface assembly and propagation of the coagulation protease cascade.</text>
</comment>
<comment type="subunit">
    <text evidence="1">Interacts with HSPE; the interaction, inhibited by heparin, promotes the generation of activated factor X and activates coagulation in the presence of activated factor VII.</text>
</comment>
<comment type="subcellular location">
    <subcellularLocation>
        <location evidence="2">Membrane</location>
        <topology evidence="2">Single-pass type I membrane protein</topology>
    </subcellularLocation>
</comment>
<comment type="similarity">
    <text evidence="4">Belongs to the tissue factor family.</text>
</comment>
<keyword id="KW-0094">Blood coagulation</keyword>
<keyword id="KW-0903">Direct protein sequencing</keyword>
<keyword id="KW-1015">Disulfide bond</keyword>
<keyword id="KW-0325">Glycoprotein</keyword>
<keyword id="KW-0356">Hemostasis</keyword>
<keyword id="KW-0449">Lipoprotein</keyword>
<keyword id="KW-0472">Membrane</keyword>
<keyword id="KW-0564">Palmitate</keyword>
<keyword id="KW-1185">Reference proteome</keyword>
<keyword id="KW-0732">Signal</keyword>
<keyword id="KW-0812">Transmembrane</keyword>
<keyword id="KW-1133">Transmembrane helix</keyword>
<dbReference type="EMBL" id="S74147">
    <property type="protein sequence ID" value="AAB20755.1"/>
    <property type="molecule type" value="mRNA"/>
</dbReference>
<dbReference type="EMBL" id="BC123808">
    <property type="protein sequence ID" value="AAI23809.2"/>
    <property type="molecule type" value="mRNA"/>
</dbReference>
<dbReference type="PIR" id="JQ1319">
    <property type="entry name" value="KFBO3"/>
</dbReference>
<dbReference type="RefSeq" id="NP_776303.1">
    <property type="nucleotide sequence ID" value="NM_173878.2"/>
</dbReference>
<dbReference type="RefSeq" id="XP_015319808.1">
    <property type="nucleotide sequence ID" value="XM_015464322.1"/>
</dbReference>
<dbReference type="SMR" id="P30931"/>
<dbReference type="FunCoup" id="P30931">
    <property type="interactions" value="256"/>
</dbReference>
<dbReference type="STRING" id="9913.ENSBTAP00000009341"/>
<dbReference type="GlyCosmos" id="P30931">
    <property type="glycosylation" value="3 sites, No reported glycans"/>
</dbReference>
<dbReference type="GlyGen" id="P30931">
    <property type="glycosylation" value="3 sites"/>
</dbReference>
<dbReference type="PaxDb" id="9913-ENSBTAP00000009341"/>
<dbReference type="Ensembl" id="ENSBTAT00000009341.5">
    <property type="protein sequence ID" value="ENSBTAP00000009341.3"/>
    <property type="gene ID" value="ENSBTAG00000007101.5"/>
</dbReference>
<dbReference type="GeneID" id="280686"/>
<dbReference type="KEGG" id="bta:280686"/>
<dbReference type="CTD" id="2152"/>
<dbReference type="VEuPathDB" id="HostDB:ENSBTAG00000007101"/>
<dbReference type="VGNC" id="VGNC:28687">
    <property type="gene designation" value="F3"/>
</dbReference>
<dbReference type="eggNOG" id="ENOG502RA1F">
    <property type="taxonomic scope" value="Eukaryota"/>
</dbReference>
<dbReference type="GeneTree" id="ENSGT00390000012668"/>
<dbReference type="HOGENOM" id="CLU_082139_0_0_1"/>
<dbReference type="InParanoid" id="P30931"/>
<dbReference type="OMA" id="PINYVYT"/>
<dbReference type="OrthoDB" id="8942372at2759"/>
<dbReference type="TreeFam" id="TF352627"/>
<dbReference type="Reactome" id="R-BTA-140834">
    <property type="pathway name" value="Extrinsic Pathway of Fibrin Clot Formation"/>
</dbReference>
<dbReference type="Proteomes" id="UP000009136">
    <property type="component" value="Chromosome 3"/>
</dbReference>
<dbReference type="Bgee" id="ENSBTAG00000007101">
    <property type="expression patterns" value="Expressed in zone of skin and 100 other cell types or tissues"/>
</dbReference>
<dbReference type="GO" id="GO:0009986">
    <property type="term" value="C:cell surface"/>
    <property type="evidence" value="ECO:0000250"/>
    <property type="project" value="BHF-UCL"/>
</dbReference>
<dbReference type="GO" id="GO:0031012">
    <property type="term" value="C:extracellular matrix"/>
    <property type="evidence" value="ECO:0000250"/>
    <property type="project" value="UniProtKB"/>
</dbReference>
<dbReference type="GO" id="GO:0005615">
    <property type="term" value="C:extracellular space"/>
    <property type="evidence" value="ECO:0000250"/>
    <property type="project" value="UniProtKB"/>
</dbReference>
<dbReference type="GO" id="GO:0005886">
    <property type="term" value="C:plasma membrane"/>
    <property type="evidence" value="ECO:0000318"/>
    <property type="project" value="GO_Central"/>
</dbReference>
<dbReference type="GO" id="GO:0004896">
    <property type="term" value="F:cytokine receptor activity"/>
    <property type="evidence" value="ECO:0000318"/>
    <property type="project" value="GO_Central"/>
</dbReference>
<dbReference type="GO" id="GO:0005543">
    <property type="term" value="F:phospholipid binding"/>
    <property type="evidence" value="ECO:0000250"/>
    <property type="project" value="UniProtKB"/>
</dbReference>
<dbReference type="GO" id="GO:0002541">
    <property type="term" value="P:activation of plasma proteins involved in acute inflammatory response"/>
    <property type="evidence" value="ECO:0000250"/>
    <property type="project" value="UniProtKB"/>
</dbReference>
<dbReference type="GO" id="GO:0007596">
    <property type="term" value="P:blood coagulation"/>
    <property type="evidence" value="ECO:0007669"/>
    <property type="project" value="UniProtKB-KW"/>
</dbReference>
<dbReference type="GO" id="GO:0019221">
    <property type="term" value="P:cytokine-mediated signaling pathway"/>
    <property type="evidence" value="ECO:0000318"/>
    <property type="project" value="GO_Central"/>
</dbReference>
<dbReference type="GO" id="GO:0045766">
    <property type="term" value="P:positive regulation of angiogenesis"/>
    <property type="evidence" value="ECO:0000250"/>
    <property type="project" value="UniProtKB"/>
</dbReference>
<dbReference type="GO" id="GO:2000353">
    <property type="term" value="P:positive regulation of endothelial cell apoptotic process"/>
    <property type="evidence" value="ECO:0000250"/>
    <property type="project" value="UniProtKB"/>
</dbReference>
<dbReference type="GO" id="GO:0001938">
    <property type="term" value="P:positive regulation of endothelial cell proliferation"/>
    <property type="evidence" value="ECO:0000250"/>
    <property type="project" value="UniProtKB"/>
</dbReference>
<dbReference type="GO" id="GO:0010641">
    <property type="term" value="P:positive regulation of platelet-derived growth factor receptor signaling pathway"/>
    <property type="evidence" value="ECO:0000250"/>
    <property type="project" value="UniProtKB"/>
</dbReference>
<dbReference type="GO" id="GO:0032008">
    <property type="term" value="P:positive regulation of TOR signaling"/>
    <property type="evidence" value="ECO:0000250"/>
    <property type="project" value="UniProtKB"/>
</dbReference>
<dbReference type="FunFam" id="2.60.40.10:FF:000899">
    <property type="entry name" value="Tissue factor"/>
    <property type="match status" value="1"/>
</dbReference>
<dbReference type="Gene3D" id="2.60.40.10">
    <property type="entry name" value="Immunoglobulins"/>
    <property type="match status" value="2"/>
</dbReference>
<dbReference type="InterPro" id="IPR003961">
    <property type="entry name" value="FN3_dom"/>
</dbReference>
<dbReference type="InterPro" id="IPR036116">
    <property type="entry name" value="FN3_sf"/>
</dbReference>
<dbReference type="InterPro" id="IPR013783">
    <property type="entry name" value="Ig-like_fold"/>
</dbReference>
<dbReference type="InterPro" id="IPR015373">
    <property type="entry name" value="Interferon/interleukin_rcp_dom"/>
</dbReference>
<dbReference type="InterPro" id="IPR001187">
    <property type="entry name" value="Tissue_factor"/>
</dbReference>
<dbReference type="InterPro" id="IPR030472">
    <property type="entry name" value="Tissue_Factor_CS"/>
</dbReference>
<dbReference type="InterPro" id="IPR050650">
    <property type="entry name" value="Type-II_Cytokine-TF_Rcpt"/>
</dbReference>
<dbReference type="PANTHER" id="PTHR20859">
    <property type="entry name" value="INTERFERON/INTERLEUKIN RECEPTOR"/>
    <property type="match status" value="1"/>
</dbReference>
<dbReference type="PANTHER" id="PTHR20859:SF22">
    <property type="entry name" value="TISSUE FACTOR"/>
    <property type="match status" value="1"/>
</dbReference>
<dbReference type="Pfam" id="PF09294">
    <property type="entry name" value="Interfer-bind"/>
    <property type="match status" value="1"/>
</dbReference>
<dbReference type="Pfam" id="PF01108">
    <property type="entry name" value="Tissue_fac"/>
    <property type="match status" value="1"/>
</dbReference>
<dbReference type="PIRSF" id="PIRSF002498">
    <property type="entry name" value="Tissue_factor_3"/>
    <property type="match status" value="1"/>
</dbReference>
<dbReference type="PRINTS" id="PR00346">
    <property type="entry name" value="TISSUEFACTOR"/>
</dbReference>
<dbReference type="SUPFAM" id="SSF49265">
    <property type="entry name" value="Fibronectin type III"/>
    <property type="match status" value="2"/>
</dbReference>
<dbReference type="PROSITE" id="PS00621">
    <property type="entry name" value="TISSUE_FACTOR"/>
    <property type="match status" value="1"/>
</dbReference>
<proteinExistence type="evidence at protein level"/>
<protein>
    <recommendedName>
        <fullName>Tissue factor</fullName>
        <shortName>TF</shortName>
    </recommendedName>
    <alternativeName>
        <fullName>Coagulation factor III</fullName>
    </alternativeName>
    <cdAntigenName>CD142</cdAntigenName>
</protein>